<gene>
    <name evidence="1" type="primary">cyaY</name>
    <name type="ordered locus">ECA4185</name>
</gene>
<proteinExistence type="inferred from homology"/>
<reference key="1">
    <citation type="journal article" date="2004" name="Proc. Natl. Acad. Sci. U.S.A.">
        <title>Genome sequence of the enterobacterial phytopathogen Erwinia carotovora subsp. atroseptica and characterization of virulence factors.</title>
        <authorList>
            <person name="Bell K.S."/>
            <person name="Sebaihia M."/>
            <person name="Pritchard L."/>
            <person name="Holden M.T.G."/>
            <person name="Hyman L.J."/>
            <person name="Holeva M.C."/>
            <person name="Thomson N.R."/>
            <person name="Bentley S.D."/>
            <person name="Churcher L.J.C."/>
            <person name="Mungall K."/>
            <person name="Atkin R."/>
            <person name="Bason N."/>
            <person name="Brooks K."/>
            <person name="Chillingworth T."/>
            <person name="Clark K."/>
            <person name="Doggett J."/>
            <person name="Fraser A."/>
            <person name="Hance Z."/>
            <person name="Hauser H."/>
            <person name="Jagels K."/>
            <person name="Moule S."/>
            <person name="Norbertczak H."/>
            <person name="Ormond D."/>
            <person name="Price C."/>
            <person name="Quail M.A."/>
            <person name="Sanders M."/>
            <person name="Walker D."/>
            <person name="Whitehead S."/>
            <person name="Salmond G.P.C."/>
            <person name="Birch P.R.J."/>
            <person name="Parkhill J."/>
            <person name="Toth I.K."/>
        </authorList>
    </citation>
    <scope>NUCLEOTIDE SEQUENCE [LARGE SCALE GENOMIC DNA]</scope>
    <source>
        <strain>SCRI 1043 / ATCC BAA-672</strain>
    </source>
</reference>
<sequence>MNDSEFHQLADELMLQLEETLDQFEGDADIDSEINGGVMTLSFENGSKIVINRQEPLHQIWLATKTGGYHFTLREERWVCDRSGEDFIALLSSACSAQAGETVHFE</sequence>
<dbReference type="EMBL" id="BX950851">
    <property type="protein sequence ID" value="CAG77082.1"/>
    <property type="molecule type" value="Genomic_DNA"/>
</dbReference>
<dbReference type="RefSeq" id="WP_011095656.1">
    <property type="nucleotide sequence ID" value="NC_004547.2"/>
</dbReference>
<dbReference type="SMR" id="Q6CZG6"/>
<dbReference type="STRING" id="218491.ECA4185"/>
<dbReference type="KEGG" id="eca:ECA4185"/>
<dbReference type="PATRIC" id="fig|218491.5.peg.4258"/>
<dbReference type="eggNOG" id="COG1965">
    <property type="taxonomic scope" value="Bacteria"/>
</dbReference>
<dbReference type="HOGENOM" id="CLU_080880_3_0_6"/>
<dbReference type="OrthoDB" id="285675at2"/>
<dbReference type="Proteomes" id="UP000007966">
    <property type="component" value="Chromosome"/>
</dbReference>
<dbReference type="GO" id="GO:0005829">
    <property type="term" value="C:cytosol"/>
    <property type="evidence" value="ECO:0007669"/>
    <property type="project" value="TreeGrafter"/>
</dbReference>
<dbReference type="GO" id="GO:0008199">
    <property type="term" value="F:ferric iron binding"/>
    <property type="evidence" value="ECO:0007669"/>
    <property type="project" value="InterPro"/>
</dbReference>
<dbReference type="GO" id="GO:0008198">
    <property type="term" value="F:ferrous iron binding"/>
    <property type="evidence" value="ECO:0007669"/>
    <property type="project" value="TreeGrafter"/>
</dbReference>
<dbReference type="GO" id="GO:0016226">
    <property type="term" value="P:iron-sulfur cluster assembly"/>
    <property type="evidence" value="ECO:0007669"/>
    <property type="project" value="UniProtKB-UniRule"/>
</dbReference>
<dbReference type="CDD" id="cd00503">
    <property type="entry name" value="Frataxin"/>
    <property type="match status" value="1"/>
</dbReference>
<dbReference type="Gene3D" id="3.30.920.10">
    <property type="entry name" value="Frataxin/CyaY"/>
    <property type="match status" value="1"/>
</dbReference>
<dbReference type="HAMAP" id="MF_00142">
    <property type="entry name" value="CyaY"/>
    <property type="match status" value="1"/>
</dbReference>
<dbReference type="InterPro" id="IPR047584">
    <property type="entry name" value="CyaY"/>
</dbReference>
<dbReference type="InterPro" id="IPR002908">
    <property type="entry name" value="Frataxin/CyaY"/>
</dbReference>
<dbReference type="InterPro" id="IPR036524">
    <property type="entry name" value="Frataxin/CyaY_sf"/>
</dbReference>
<dbReference type="InterPro" id="IPR020895">
    <property type="entry name" value="Frataxin_CS"/>
</dbReference>
<dbReference type="NCBIfam" id="TIGR03421">
    <property type="entry name" value="FeS_CyaY"/>
    <property type="match status" value="1"/>
</dbReference>
<dbReference type="PANTHER" id="PTHR16821">
    <property type="entry name" value="FRATAXIN"/>
    <property type="match status" value="1"/>
</dbReference>
<dbReference type="PANTHER" id="PTHR16821:SF2">
    <property type="entry name" value="FRATAXIN, MITOCHONDRIAL"/>
    <property type="match status" value="1"/>
</dbReference>
<dbReference type="Pfam" id="PF01491">
    <property type="entry name" value="Frataxin_Cyay"/>
    <property type="match status" value="1"/>
</dbReference>
<dbReference type="SMART" id="SM01219">
    <property type="entry name" value="Frataxin_Cyay"/>
    <property type="match status" value="1"/>
</dbReference>
<dbReference type="SUPFAM" id="SSF55387">
    <property type="entry name" value="Frataxin/Nqo15-like"/>
    <property type="match status" value="1"/>
</dbReference>
<dbReference type="PROSITE" id="PS01344">
    <property type="entry name" value="FRATAXIN_1"/>
    <property type="match status" value="1"/>
</dbReference>
<dbReference type="PROSITE" id="PS50810">
    <property type="entry name" value="FRATAXIN_2"/>
    <property type="match status" value="1"/>
</dbReference>
<evidence type="ECO:0000255" key="1">
    <source>
        <dbReference type="HAMAP-Rule" id="MF_00142"/>
    </source>
</evidence>
<name>CYAY_PECAS</name>
<organism>
    <name type="scientific">Pectobacterium atrosepticum (strain SCRI 1043 / ATCC BAA-672)</name>
    <name type="common">Erwinia carotovora subsp. atroseptica</name>
    <dbReference type="NCBI Taxonomy" id="218491"/>
    <lineage>
        <taxon>Bacteria</taxon>
        <taxon>Pseudomonadati</taxon>
        <taxon>Pseudomonadota</taxon>
        <taxon>Gammaproteobacteria</taxon>
        <taxon>Enterobacterales</taxon>
        <taxon>Pectobacteriaceae</taxon>
        <taxon>Pectobacterium</taxon>
    </lineage>
</organism>
<comment type="function">
    <text evidence="1">Involved in iron-sulfur (Fe-S) cluster assembly. May act as a regulator of Fe-S biogenesis.</text>
</comment>
<comment type="similarity">
    <text evidence="1">Belongs to the frataxin family.</text>
</comment>
<protein>
    <recommendedName>
        <fullName evidence="1">Iron-sulfur cluster assembly protein CyaY</fullName>
    </recommendedName>
</protein>
<accession>Q6CZG6</accession>
<feature type="chain" id="PRO_0000193940" description="Iron-sulfur cluster assembly protein CyaY">
    <location>
        <begin position="1"/>
        <end position="106"/>
    </location>
</feature>
<keyword id="KW-0408">Iron</keyword>
<keyword id="KW-0479">Metal-binding</keyword>
<keyword id="KW-1185">Reference proteome</keyword>